<gene>
    <name evidence="1" type="primary">pqqE</name>
</gene>
<organism>
    <name type="scientific">Kluyvera intermedia</name>
    <name type="common">Enterobacter intermedius</name>
    <dbReference type="NCBI Taxonomy" id="61648"/>
    <lineage>
        <taxon>Bacteria</taxon>
        <taxon>Pseudomonadati</taxon>
        <taxon>Pseudomonadota</taxon>
        <taxon>Gammaproteobacteria</taxon>
        <taxon>Enterobacterales</taxon>
        <taxon>Enterobacteriaceae</taxon>
        <taxon>Kluyvera</taxon>
    </lineage>
</organism>
<reference key="1">
    <citation type="journal article" date="2003" name="Curr. Microbiol.">
        <title>Cloning and expression of pyrroloquinoline quinone (PQQ) genes from a phosphate-solubilizing bacterium Enterobacter intermedium.</title>
        <authorList>
            <person name="Kim C.H."/>
            <person name="Han S.H."/>
            <person name="Kim K.Y."/>
            <person name="Cho B.H."/>
            <person name="Kim Y.H."/>
            <person name="Koo B.S."/>
            <person name="Kim Y.C."/>
        </authorList>
    </citation>
    <scope>NUCLEOTIDE SEQUENCE [GENOMIC DNA]</scope>
</reference>
<sequence>MNPSKSVTPPLWLLAELTYRCPLQCPYCSNPLDFSQQKKELTTEQWIEVFRQARAMGSVQLGFSGGEPLTRKDLPELIRAARDLGFYTNLITSGIGLTAKKLDAFADAGLDHIQISFQASDETLNAALAGSKKAFQQKLEMAKAVKAHGYPMVLNFVLHRHNIDQIDKIIDLCIELDADDVELATCQFYGWAQLNREGLLPTREQIANAEAVVADYRQRMGASGNLTNPAVRDAGLLRRAAETLHGRMGIDLPQRHADCTALPCHSARQLPVAFPSVLERTLDDIWYNSFGFNRYRGFDWMPEPCRSCDEKAKDFGGCRCQAFMLTGDADNTDPVCSKSPHHGKILEARREANCSDIKIQQLQFRNRSNSELIF</sequence>
<accession>P59748</accession>
<protein>
    <recommendedName>
        <fullName evidence="1">PqqA peptide cyclase</fullName>
        <ecNumber evidence="1">1.21.98.4</ecNumber>
    </recommendedName>
    <alternativeName>
        <fullName evidence="1">Coenzyme PQQ synthesis protein E</fullName>
    </alternativeName>
    <alternativeName>
        <fullName evidence="1">Pyrroloquinoline quinone biosynthesis protein E</fullName>
    </alternativeName>
</protein>
<feature type="chain" id="PRO_0000219938" description="PqqA peptide cyclase">
    <location>
        <begin position="1"/>
        <end position="374"/>
    </location>
</feature>
<feature type="domain" description="Radical SAM core" evidence="2">
    <location>
        <begin position="7"/>
        <end position="222"/>
    </location>
</feature>
<feature type="binding site" evidence="1">
    <location>
        <position position="21"/>
    </location>
    <ligand>
        <name>[4Fe-4S] cluster</name>
        <dbReference type="ChEBI" id="CHEBI:49883"/>
        <note>4Fe-4S-S-AdoMet</note>
    </ligand>
</feature>
<feature type="binding site" evidence="1">
    <location>
        <position position="25"/>
    </location>
    <ligand>
        <name>[4Fe-4S] cluster</name>
        <dbReference type="ChEBI" id="CHEBI:49883"/>
        <note>4Fe-4S-S-AdoMet</note>
    </ligand>
</feature>
<feature type="binding site" evidence="1">
    <location>
        <position position="28"/>
    </location>
    <ligand>
        <name>[4Fe-4S] cluster</name>
        <dbReference type="ChEBI" id="CHEBI:49883"/>
        <note>4Fe-4S-S-AdoMet</note>
    </ligand>
</feature>
<keyword id="KW-0004">4Fe-4S</keyword>
<keyword id="KW-0408">Iron</keyword>
<keyword id="KW-0411">Iron-sulfur</keyword>
<keyword id="KW-0479">Metal-binding</keyword>
<keyword id="KW-0560">Oxidoreductase</keyword>
<keyword id="KW-0884">PQQ biosynthesis</keyword>
<keyword id="KW-0949">S-adenosyl-L-methionine</keyword>
<dbReference type="EC" id="1.21.98.4" evidence="1"/>
<dbReference type="EMBL" id="AY216683">
    <property type="protein sequence ID" value="AAP34382.1"/>
    <property type="molecule type" value="Genomic_DNA"/>
</dbReference>
<dbReference type="SMR" id="P59748"/>
<dbReference type="UniPathway" id="UPA00539"/>
<dbReference type="GO" id="GO:0051539">
    <property type="term" value="F:4 iron, 4 sulfur cluster binding"/>
    <property type="evidence" value="ECO:0007669"/>
    <property type="project" value="UniProtKB-KW"/>
</dbReference>
<dbReference type="GO" id="GO:0009975">
    <property type="term" value="F:cyclase activity"/>
    <property type="evidence" value="ECO:0007669"/>
    <property type="project" value="UniProtKB-UniRule"/>
</dbReference>
<dbReference type="GO" id="GO:0005506">
    <property type="term" value="F:iron ion binding"/>
    <property type="evidence" value="ECO:0007669"/>
    <property type="project" value="UniProtKB-UniRule"/>
</dbReference>
<dbReference type="GO" id="GO:0016491">
    <property type="term" value="F:oxidoreductase activity"/>
    <property type="evidence" value="ECO:0007669"/>
    <property type="project" value="UniProtKB-KW"/>
</dbReference>
<dbReference type="GO" id="GO:1904047">
    <property type="term" value="F:S-adenosyl-L-methionine binding"/>
    <property type="evidence" value="ECO:0007669"/>
    <property type="project" value="UniProtKB-UniRule"/>
</dbReference>
<dbReference type="GO" id="GO:0018189">
    <property type="term" value="P:pyrroloquinoline quinone biosynthetic process"/>
    <property type="evidence" value="ECO:0007669"/>
    <property type="project" value="UniProtKB-UniRule"/>
</dbReference>
<dbReference type="CDD" id="cd01335">
    <property type="entry name" value="Radical_SAM"/>
    <property type="match status" value="1"/>
</dbReference>
<dbReference type="CDD" id="cd21119">
    <property type="entry name" value="SPASM_PqqE"/>
    <property type="match status" value="1"/>
</dbReference>
<dbReference type="Gene3D" id="3.20.20.70">
    <property type="entry name" value="Aldolase class I"/>
    <property type="match status" value="1"/>
</dbReference>
<dbReference type="HAMAP" id="MF_00660">
    <property type="entry name" value="PqqE"/>
    <property type="match status" value="1"/>
</dbReference>
<dbReference type="InterPro" id="IPR013785">
    <property type="entry name" value="Aldolase_TIM"/>
</dbReference>
<dbReference type="InterPro" id="IPR006638">
    <property type="entry name" value="Elp3/MiaA/NifB-like_rSAM"/>
</dbReference>
<dbReference type="InterPro" id="IPR000385">
    <property type="entry name" value="MoaA_NifB_PqqE_Fe-S-bd_CS"/>
</dbReference>
<dbReference type="InterPro" id="IPR011843">
    <property type="entry name" value="PQQ_synth_PqqE_bac"/>
</dbReference>
<dbReference type="InterPro" id="IPR017200">
    <property type="entry name" value="PqqE-like"/>
</dbReference>
<dbReference type="InterPro" id="IPR050377">
    <property type="entry name" value="Radical_SAM_PqqE_MftC-like"/>
</dbReference>
<dbReference type="InterPro" id="IPR007197">
    <property type="entry name" value="rSAM"/>
</dbReference>
<dbReference type="NCBIfam" id="TIGR02109">
    <property type="entry name" value="PQQ_syn_pqqE"/>
    <property type="match status" value="1"/>
</dbReference>
<dbReference type="PANTHER" id="PTHR11228:SF7">
    <property type="entry name" value="PQQA PEPTIDE CYCLASE"/>
    <property type="match status" value="1"/>
</dbReference>
<dbReference type="PANTHER" id="PTHR11228">
    <property type="entry name" value="RADICAL SAM DOMAIN PROTEIN"/>
    <property type="match status" value="1"/>
</dbReference>
<dbReference type="Pfam" id="PF13353">
    <property type="entry name" value="Fer4_12"/>
    <property type="match status" value="1"/>
</dbReference>
<dbReference type="Pfam" id="PF04055">
    <property type="entry name" value="Radical_SAM"/>
    <property type="match status" value="1"/>
</dbReference>
<dbReference type="PIRSF" id="PIRSF037420">
    <property type="entry name" value="PQQ_syn_pqqE"/>
    <property type="match status" value="1"/>
</dbReference>
<dbReference type="SFLD" id="SFLDF00280">
    <property type="entry name" value="coenzyme_PQQ_synthesis_protein"/>
    <property type="match status" value="1"/>
</dbReference>
<dbReference type="SFLD" id="SFLDG01386">
    <property type="entry name" value="main_SPASM_domain-containing"/>
    <property type="match status" value="1"/>
</dbReference>
<dbReference type="SMART" id="SM00729">
    <property type="entry name" value="Elp3"/>
    <property type="match status" value="1"/>
</dbReference>
<dbReference type="SUPFAM" id="SSF102114">
    <property type="entry name" value="Radical SAM enzymes"/>
    <property type="match status" value="1"/>
</dbReference>
<dbReference type="PROSITE" id="PS01305">
    <property type="entry name" value="MOAA_NIFB_PQQE"/>
    <property type="match status" value="1"/>
</dbReference>
<dbReference type="PROSITE" id="PS51918">
    <property type="entry name" value="RADICAL_SAM"/>
    <property type="match status" value="1"/>
</dbReference>
<proteinExistence type="inferred from homology"/>
<comment type="function">
    <text evidence="1">Catalyzes the cross-linking of a glutamate residue and a tyrosine residue in the PqqA protein as part of the biosynthesis of pyrroloquinoline quinone (PQQ).</text>
</comment>
<comment type="catalytic activity">
    <reaction evidence="1">
        <text>[PQQ precursor protein] + S-adenosyl-L-methionine = E-Y cross-linked-[PQQ precursor protein] + 5'-deoxyadenosine + L-methionine + H(+)</text>
        <dbReference type="Rhea" id="RHEA:56836"/>
        <dbReference type="Rhea" id="RHEA-COMP:14800"/>
        <dbReference type="Rhea" id="RHEA-COMP:14801"/>
        <dbReference type="ChEBI" id="CHEBI:15378"/>
        <dbReference type="ChEBI" id="CHEBI:17319"/>
        <dbReference type="ChEBI" id="CHEBI:57844"/>
        <dbReference type="ChEBI" id="CHEBI:59789"/>
        <dbReference type="ChEBI" id="CHEBI:141026"/>
        <dbReference type="ChEBI" id="CHEBI:141027"/>
        <dbReference type="EC" id="1.21.98.4"/>
    </reaction>
</comment>
<comment type="cofactor">
    <cofactor evidence="1">
        <name>[4Fe-4S] cluster</name>
        <dbReference type="ChEBI" id="CHEBI:49883"/>
    </cofactor>
    <text evidence="1">Binds 1 [4Fe-4S] cluster. The cluster is coordinated with 3 cysteines and an exchangeable S-adenosyl-L-methionine.</text>
</comment>
<comment type="pathway">
    <text evidence="1">Cofactor biosynthesis; pyrroloquinoline quinone biosynthesis.</text>
</comment>
<comment type="subunit">
    <text evidence="1">Interacts with PqqD. The interaction is necessary for activity of PqqE.</text>
</comment>
<comment type="similarity">
    <text evidence="1">Belongs to the radical SAM superfamily. PqqE family.</text>
</comment>
<name>PQQE_KLUIN</name>
<evidence type="ECO:0000255" key="1">
    <source>
        <dbReference type="HAMAP-Rule" id="MF_00660"/>
    </source>
</evidence>
<evidence type="ECO:0000255" key="2">
    <source>
        <dbReference type="PROSITE-ProRule" id="PRU01266"/>
    </source>
</evidence>